<feature type="chain" id="PRO_0000373698" description="Uncharacterized protein B475L">
    <location>
        <begin position="1"/>
        <end position="487"/>
    </location>
</feature>
<feature type="transmembrane region" description="Helical" evidence="1">
    <location>
        <begin position="7"/>
        <end position="28"/>
    </location>
</feature>
<feature type="region of interest" description="Disordered" evidence="2">
    <location>
        <begin position="294"/>
        <end position="324"/>
    </location>
</feature>
<feature type="coiled-coil region" evidence="1">
    <location>
        <begin position="196"/>
        <end position="235"/>
    </location>
</feature>
<feature type="compositionally biased region" description="Polar residues" evidence="2">
    <location>
        <begin position="294"/>
        <end position="305"/>
    </location>
</feature>
<feature type="glycosylation site" description="N-linked (GlcNAc...) asparagine; by host" evidence="1">
    <location>
        <position position="73"/>
    </location>
</feature>
<feature type="glycosylation site" description="N-linked (GlcNAc...) asparagine; by host" evidence="1">
    <location>
        <position position="83"/>
    </location>
</feature>
<feature type="glycosylation site" description="N-linked (GlcNAc...) asparagine; by host" evidence="1">
    <location>
        <position position="195"/>
    </location>
</feature>
<feature type="glycosylation site" description="N-linked (GlcNAc...) asparagine; by host" evidence="1">
    <location>
        <position position="462"/>
    </location>
</feature>
<keyword id="KW-0175">Coiled coil</keyword>
<keyword id="KW-0325">Glycoprotein</keyword>
<keyword id="KW-1043">Host membrane</keyword>
<keyword id="KW-0426">Late protein</keyword>
<keyword id="KW-0472">Membrane</keyword>
<keyword id="KW-0812">Transmembrane</keyword>
<keyword id="KW-1133">Transmembrane helix</keyword>
<name>VF475_ASFP4</name>
<comment type="subcellular location">
    <subcellularLocation>
        <location evidence="3">Host membrane</location>
        <topology evidence="3">Single-pass membrane protein</topology>
    </subcellularLocation>
</comment>
<comment type="induction">
    <text evidence="3">Expressed in the late phase of the viral replicative cycle.</text>
</comment>
<comment type="similarity">
    <text evidence="3">Belongs to the asfivirus B475L family.</text>
</comment>
<sequence>MDQEESHVISIFETLGAYFINIFYNFLYKNALYKKHSIVTEYQYQVKGYILGVKQNKKLYEKMLDSFYKYFCNITQINSKTLNFSNFVSTIVDSFIPKEYSQSISLEKKESILELLLCDYISNLGTFITTEKMLPFIIKNRKENYHKVTKEMQDYSLTFLLKKRMELYNKFLRKQAYVEPETELEETYARLSSYNRSLLHQIEELTSEKKSLLADLSTLRKKYEKRQSEYRRLVQLLYQQIQRSSTSKSSYPLTKFIETLPSEHFSNEEYQKETPADQKEVVETELLRKQELLTSQELTSKSPNNYPVPHSRTIVSKPSDNYPVPRSRTTKLDFDNSLQNQELHTKNGFSEKDIVEFSQDKPVFKQDKPEEENILANNQDNPEEEDILAIKQDKPEEEDILAIKQDKPEEEDILEFNQDKPEFKEAVLDIKENILEEENQDEPIVQNPFLENFWKPEQKTFNQSGLFEESSYFSNDWSGGDVTLNFS</sequence>
<proteinExistence type="inferred from homology"/>
<evidence type="ECO:0000255" key="1"/>
<evidence type="ECO:0000256" key="2">
    <source>
        <dbReference type="SAM" id="MobiDB-lite"/>
    </source>
</evidence>
<evidence type="ECO:0000305" key="3"/>
<gene>
    <name type="ordered locus">Pret-089</name>
</gene>
<organism>
    <name type="scientific">African swine fever virus (isolate Tick/South Africa/Pretoriuskop Pr4/1996)</name>
    <name type="common">ASFV</name>
    <dbReference type="NCBI Taxonomy" id="561443"/>
    <lineage>
        <taxon>Viruses</taxon>
        <taxon>Varidnaviria</taxon>
        <taxon>Bamfordvirae</taxon>
        <taxon>Nucleocytoviricota</taxon>
        <taxon>Pokkesviricetes</taxon>
        <taxon>Asfuvirales</taxon>
        <taxon>Asfarviridae</taxon>
        <taxon>Asfivirus</taxon>
        <taxon>African swine fever virus</taxon>
    </lineage>
</organism>
<dbReference type="EMBL" id="AY261363">
    <property type="status" value="NOT_ANNOTATED_CDS"/>
    <property type="molecule type" value="Genomic_DNA"/>
</dbReference>
<dbReference type="SMR" id="P0CAH8"/>
<dbReference type="Proteomes" id="UP000000859">
    <property type="component" value="Segment"/>
</dbReference>
<dbReference type="GO" id="GO:0033644">
    <property type="term" value="C:host cell membrane"/>
    <property type="evidence" value="ECO:0007669"/>
    <property type="project" value="UniProtKB-SubCell"/>
</dbReference>
<dbReference type="GO" id="GO:0016020">
    <property type="term" value="C:membrane"/>
    <property type="evidence" value="ECO:0007669"/>
    <property type="project" value="UniProtKB-KW"/>
</dbReference>
<reference key="1">
    <citation type="submission" date="2003-03" db="EMBL/GenBank/DDBJ databases">
        <title>African swine fever virus genomes.</title>
        <authorList>
            <person name="Kutish G.F."/>
            <person name="Rock D.L."/>
        </authorList>
    </citation>
    <scope>NUCLEOTIDE SEQUENCE [LARGE SCALE GENOMIC DNA]</scope>
</reference>
<protein>
    <recommendedName>
        <fullName>Uncharacterized protein B475L</fullName>
        <shortName>pB475L</shortName>
    </recommendedName>
</protein>
<organismHost>
    <name type="scientific">Ornithodoros</name>
    <name type="common">relapsing fever ticks</name>
    <dbReference type="NCBI Taxonomy" id="6937"/>
</organismHost>
<organismHost>
    <name type="scientific">Phacochoerus aethiopicus</name>
    <name type="common">Warthog</name>
    <dbReference type="NCBI Taxonomy" id="85517"/>
</organismHost>
<organismHost>
    <name type="scientific">Phacochoerus africanus</name>
    <name type="common">Warthog</name>
    <dbReference type="NCBI Taxonomy" id="41426"/>
</organismHost>
<organismHost>
    <name type="scientific">Potamochoerus larvatus</name>
    <name type="common">Bushpig</name>
    <dbReference type="NCBI Taxonomy" id="273792"/>
</organismHost>
<organismHost>
    <name type="scientific">Sus scrofa</name>
    <name type="common">Pig</name>
    <dbReference type="NCBI Taxonomy" id="9823"/>
</organismHost>
<accession>P0CAH8</accession>